<organism>
    <name type="scientific">Prochlorococcus marinus (strain MIT 9303)</name>
    <dbReference type="NCBI Taxonomy" id="59922"/>
    <lineage>
        <taxon>Bacteria</taxon>
        <taxon>Bacillati</taxon>
        <taxon>Cyanobacteriota</taxon>
        <taxon>Cyanophyceae</taxon>
        <taxon>Synechococcales</taxon>
        <taxon>Prochlorococcaceae</taxon>
        <taxon>Prochlorococcus</taxon>
    </lineage>
</organism>
<accession>A2CA48</accession>
<gene>
    <name type="ordered locus">P9303_16141</name>
</gene>
<protein>
    <recommendedName>
        <fullName evidence="1">UPF0102 protein P9303_16141</fullName>
    </recommendedName>
</protein>
<comment type="similarity">
    <text evidence="1">Belongs to the UPF0102 family.</text>
</comment>
<sequence length="126" mass="14770">MMESTRKGCWGEERVLRLLRRRGWQLVSQRWSCRYGELDLVLEKQQRLLVVEVKSRRSRGLDLWGLSAFNKGKQLRLKRAIGCWLATHPYFAEHSLELVLALVPLPPSRNTLDWIRIDDLDIDAAD</sequence>
<proteinExistence type="inferred from homology"/>
<dbReference type="EMBL" id="CP000554">
    <property type="protein sequence ID" value="ABM78358.1"/>
    <property type="molecule type" value="Genomic_DNA"/>
</dbReference>
<dbReference type="RefSeq" id="WP_011826247.1">
    <property type="nucleotide sequence ID" value="NC_008820.1"/>
</dbReference>
<dbReference type="SMR" id="A2CA48"/>
<dbReference type="KEGG" id="pmf:P9303_16141"/>
<dbReference type="HOGENOM" id="CLU_115353_0_3_3"/>
<dbReference type="BioCyc" id="PMAR59922:G1G80-1407-MONOMER"/>
<dbReference type="Proteomes" id="UP000002274">
    <property type="component" value="Chromosome"/>
</dbReference>
<dbReference type="GO" id="GO:0003676">
    <property type="term" value="F:nucleic acid binding"/>
    <property type="evidence" value="ECO:0007669"/>
    <property type="project" value="InterPro"/>
</dbReference>
<dbReference type="Gene3D" id="3.40.1350.10">
    <property type="match status" value="1"/>
</dbReference>
<dbReference type="HAMAP" id="MF_00048">
    <property type="entry name" value="UPF0102"/>
    <property type="match status" value="1"/>
</dbReference>
<dbReference type="InterPro" id="IPR011335">
    <property type="entry name" value="Restrct_endonuc-II-like"/>
</dbReference>
<dbReference type="InterPro" id="IPR011856">
    <property type="entry name" value="tRNA_endonuc-like_dom_sf"/>
</dbReference>
<dbReference type="InterPro" id="IPR003509">
    <property type="entry name" value="UPF0102_YraN-like"/>
</dbReference>
<dbReference type="NCBIfam" id="NF011281">
    <property type="entry name" value="PRK14689.1"/>
    <property type="match status" value="1"/>
</dbReference>
<dbReference type="PANTHER" id="PTHR34039">
    <property type="entry name" value="UPF0102 PROTEIN YRAN"/>
    <property type="match status" value="1"/>
</dbReference>
<dbReference type="PANTHER" id="PTHR34039:SF1">
    <property type="entry name" value="UPF0102 PROTEIN YRAN"/>
    <property type="match status" value="1"/>
</dbReference>
<dbReference type="Pfam" id="PF02021">
    <property type="entry name" value="UPF0102"/>
    <property type="match status" value="1"/>
</dbReference>
<dbReference type="SUPFAM" id="SSF52980">
    <property type="entry name" value="Restriction endonuclease-like"/>
    <property type="match status" value="1"/>
</dbReference>
<evidence type="ECO:0000255" key="1">
    <source>
        <dbReference type="HAMAP-Rule" id="MF_00048"/>
    </source>
</evidence>
<feature type="chain" id="PRO_1000009244" description="UPF0102 protein P9303_16141">
    <location>
        <begin position="1"/>
        <end position="126"/>
    </location>
</feature>
<reference key="1">
    <citation type="journal article" date="2007" name="PLoS Genet.">
        <title>Patterns and implications of gene gain and loss in the evolution of Prochlorococcus.</title>
        <authorList>
            <person name="Kettler G.C."/>
            <person name="Martiny A.C."/>
            <person name="Huang K."/>
            <person name="Zucker J."/>
            <person name="Coleman M.L."/>
            <person name="Rodrigue S."/>
            <person name="Chen F."/>
            <person name="Lapidus A."/>
            <person name="Ferriera S."/>
            <person name="Johnson J."/>
            <person name="Steglich C."/>
            <person name="Church G.M."/>
            <person name="Richardson P."/>
            <person name="Chisholm S.W."/>
        </authorList>
    </citation>
    <scope>NUCLEOTIDE SEQUENCE [LARGE SCALE GENOMIC DNA]</scope>
    <source>
        <strain>MIT 9303</strain>
    </source>
</reference>
<name>Y1614_PROM3</name>